<dbReference type="EMBL" id="U00096">
    <property type="status" value="NOT_ANNOTATED_CDS"/>
    <property type="molecule type" value="Genomic_DNA"/>
</dbReference>
<dbReference type="EMBL" id="AP009048">
    <property type="status" value="NOT_ANNOTATED_CDS"/>
    <property type="molecule type" value="Genomic_DNA"/>
</dbReference>
<dbReference type="PIR" id="T09188">
    <property type="entry name" value="T09188"/>
</dbReference>
<dbReference type="DIP" id="DIP-48047N"/>
<dbReference type="FunCoup" id="P77184">
    <property type="interactions" value="46"/>
</dbReference>
<dbReference type="IntAct" id="P77184">
    <property type="interactions" value="1"/>
</dbReference>
<dbReference type="InParanoid" id="P77184"/>
<dbReference type="PhylomeDB" id="P77184"/>
<dbReference type="Proteomes" id="UP000000625">
    <property type="component" value="Chromosome"/>
</dbReference>
<dbReference type="GO" id="GO:0044384">
    <property type="term" value="C:host outer membrane"/>
    <property type="evidence" value="ECO:0007669"/>
    <property type="project" value="InterPro"/>
</dbReference>
<dbReference type="Gene3D" id="2.40.160.20">
    <property type="match status" value="1"/>
</dbReference>
<dbReference type="InterPro" id="IPR000758">
    <property type="entry name" value="Enterovir_OMP"/>
</dbReference>
<dbReference type="InterPro" id="IPR011250">
    <property type="entry name" value="OMP/PagP_b-brl"/>
</dbReference>
<dbReference type="Pfam" id="PF06316">
    <property type="entry name" value="Ail_Lom"/>
    <property type="match status" value="1"/>
</dbReference>
<dbReference type="SUPFAM" id="SSF56925">
    <property type="entry name" value="OMPA-like"/>
    <property type="match status" value="1"/>
</dbReference>
<reference key="1">
    <citation type="journal article" date="1997" name="Science">
        <title>The complete genome sequence of Escherichia coli K-12.</title>
        <authorList>
            <person name="Blattner F.R."/>
            <person name="Plunkett G. III"/>
            <person name="Bloch C.A."/>
            <person name="Perna N.T."/>
            <person name="Burland V."/>
            <person name="Riley M."/>
            <person name="Collado-Vides J."/>
            <person name="Glasner J.D."/>
            <person name="Rode C.K."/>
            <person name="Mayhew G.F."/>
            <person name="Gregor J."/>
            <person name="Davis N.W."/>
            <person name="Kirkpatrick H.A."/>
            <person name="Goeden M.A."/>
            <person name="Rose D.J."/>
            <person name="Mau B."/>
            <person name="Shao Y."/>
        </authorList>
    </citation>
    <scope>NUCLEOTIDE SEQUENCE [LARGE SCALE GENOMIC DNA]</scope>
    <source>
        <strain>K12 / MG1655 / ATCC 47076</strain>
    </source>
</reference>
<reference key="2">
    <citation type="journal article" date="2006" name="Mol. Syst. Biol.">
        <title>Highly accurate genome sequences of Escherichia coli K-12 strains MG1655 and W3110.</title>
        <authorList>
            <person name="Hayashi K."/>
            <person name="Morooka N."/>
            <person name="Yamamoto Y."/>
            <person name="Fujita K."/>
            <person name="Isono K."/>
            <person name="Choi S."/>
            <person name="Ohtsubo E."/>
            <person name="Baba T."/>
            <person name="Wanner B.L."/>
            <person name="Mori H."/>
            <person name="Horiuchi T."/>
        </authorList>
    </citation>
    <scope>NUCLEOTIDE SEQUENCE [LARGE SCALE GENOMIC DNA]</scope>
    <source>
        <strain>K12 / W3110 / ATCC 27325 / DSM 5911</strain>
    </source>
</reference>
<accession>P77184</accession>
<protein>
    <recommendedName>
        <fullName>Putative protein LomR</fullName>
    </recommendedName>
</protein>
<name>LOMR_ECOLI</name>
<gene>
    <name type="primary">lomR</name>
    <name type="ordered locus">b4570</name>
    <name type="ordered locus">JW5884/JW5904</name>
    <name type="ORF">b1369/b1371</name>
</gene>
<proteinExistence type="uncertain"/>
<organism>
    <name type="scientific">Escherichia coli (strain K12)</name>
    <dbReference type="NCBI Taxonomy" id="83333"/>
    <lineage>
        <taxon>Bacteria</taxon>
        <taxon>Pseudomonadati</taxon>
        <taxon>Pseudomonadota</taxon>
        <taxon>Gammaproteobacteria</taxon>
        <taxon>Enterobacterales</taxon>
        <taxon>Enterobacteriaceae</taxon>
        <taxon>Escherichia</taxon>
    </lineage>
</organism>
<feature type="chain" id="PRO_0000270207" description="Putative protein LomR">
    <location>
        <begin position="1"/>
        <end position="51"/>
    </location>
</feature>
<evidence type="ECO:0000305" key="1"/>
<sequence>MRNRWFSVMVGPSVRVNEWFSAYAMAGMAYSRVSTFSGDYLRVTDNKGRCE</sequence>
<keyword id="KW-1185">Reference proteome</keyword>
<comment type="miscellaneous">
    <text>This protein is encoded on Rac prophage.</text>
</comment>
<comment type="similarity">
    <text evidence="1">Belongs to the outer membrane OOP (TC 1.B.6) superfamily. Ail family.</text>
</comment>
<comment type="caution">
    <text evidence="1">Could be the product of a pseudogene, it is missing the C-terminus compared to orthologs. The sequence is interrupted by an IS5Y insertion sequence which causes the frameshift and loss of C-terminus.</text>
</comment>